<organismHost>
    <name type="scientific">Avena sativa</name>
    <name type="common">Oat</name>
    <dbReference type="NCBI Taxonomy" id="4498"/>
</organismHost>
<organismHost>
    <name type="scientific">Digitaria</name>
    <dbReference type="NCBI Taxonomy" id="66017"/>
</organismHost>
<organismHost>
    <name type="scientific">Eragrostis</name>
    <dbReference type="NCBI Taxonomy" id="38413"/>
</organismHost>
<organismHost>
    <name type="scientific">Hordeum vulgare</name>
    <name type="common">Barley</name>
    <dbReference type="NCBI Taxonomy" id="4513"/>
</organismHost>
<organismHost>
    <name type="scientific">Oryza sativa</name>
    <name type="common">Rice</name>
    <dbReference type="NCBI Taxonomy" id="4530"/>
</organismHost>
<organismHost>
    <name type="scientific">Setaria italica</name>
    <name type="common">Foxtail millet</name>
    <name type="synonym">Panicum italicum</name>
    <dbReference type="NCBI Taxonomy" id="4555"/>
</organismHost>
<organismHost>
    <name type="scientific">Setaria viridis</name>
    <name type="common">Green bristlegrass</name>
    <name type="synonym">Setaria italica subsp. viridis</name>
    <dbReference type="NCBI Taxonomy" id="4556"/>
</organismHost>
<organismHost>
    <name type="scientific">Triticum aestivum</name>
    <name type="common">Wheat</name>
    <dbReference type="NCBI Taxonomy" id="4565"/>
</organismHost>
<organismHost>
    <name type="scientific">Zea mays</name>
    <name type="common">Maize</name>
    <dbReference type="NCBI Taxonomy" id="4577"/>
</organismHost>
<proteinExistence type="inferred from homology"/>
<protein>
    <recommendedName>
        <fullName>Suppressor of RNA silencing p3</fullName>
    </recommendedName>
    <alternativeName>
        <fullName>Protein NS3</fullName>
    </alternativeName>
    <alternativeName>
        <fullName>Protein p3</fullName>
    </alternativeName>
</protein>
<sequence length="211" mass="23848">MNVFTSSVGSVEFDHPLLLENDLTSLSINCDDVHCSSRALCYIYDIHSSRHPSIDEHQFLRLLHGPDDAVTLGSFLKTLIWILSHDKNLPEEYRLPTIMMSSSYVKFFTEVKPRPPSTNCWTCRMSKDNLPFTVPSVKGFPPDAELYIVPISDHDGKPVKFDNRKTLYRSPSKKRHKYVISSDKPPLSARYVKYVDSSALESSPGSSPAVL</sequence>
<organism>
    <name type="scientific">Rice stripe virus (isolate M)</name>
    <name type="common">RSV</name>
    <dbReference type="NCBI Taxonomy" id="36393"/>
    <lineage>
        <taxon>Viruses</taxon>
        <taxon>Riboviria</taxon>
        <taxon>Orthornavirae</taxon>
        <taxon>Negarnaviricota</taxon>
        <taxon>Polyploviricotina</taxon>
        <taxon>Ellioviricetes</taxon>
        <taxon>Bunyavirales</taxon>
        <taxon>Phenuiviridae</taxon>
        <taxon>Tenuivirus</taxon>
        <taxon>Tenuivirus oryzaclavatae</taxon>
    </lineage>
</organism>
<keyword id="KW-1035">Host cytoplasm</keyword>
<keyword id="KW-0945">Host-virus interaction</keyword>
<keyword id="KW-1090">Inhibition of host innate immune response by virus</keyword>
<keyword id="KW-0694">RNA-binding</keyword>
<keyword id="KW-0941">Suppressor of RNA silencing</keyword>
<keyword id="KW-0899">Viral immunoevasion</keyword>
<evidence type="ECO:0000250" key="1"/>
<evidence type="ECO:0000305" key="2"/>
<accession>Q01210</accession>
<feature type="chain" id="PRO_0000222528" description="Suppressor of RNA silencing p3">
    <location>
        <begin position="1"/>
        <end position="211"/>
    </location>
</feature>
<gene>
    <name type="ORF">p3</name>
</gene>
<comment type="function">
    <text evidence="1">Acts as a suppressor of RNA-mediated gene silencing, also known as post-transcriptional gene silencing (PTGS), presumably through the binding of dsRNA.</text>
</comment>
<comment type="subunit">
    <text evidence="1">Homodimer.</text>
</comment>
<comment type="subcellular location">
    <subcellularLocation>
        <location evidence="1">Host cytoplasm</location>
    </subcellularLocation>
</comment>
<comment type="similarity">
    <text evidence="2">Belongs to the tenuiviruses p3 protein family.</text>
</comment>
<dbReference type="EMBL" id="D01094">
    <property type="protein sequence ID" value="BAA00878.1"/>
    <property type="molecule type" value="Genomic_RNA"/>
</dbReference>
<dbReference type="SMR" id="Q01210"/>
<dbReference type="GO" id="GO:0030430">
    <property type="term" value="C:host cell cytoplasm"/>
    <property type="evidence" value="ECO:0007669"/>
    <property type="project" value="UniProtKB-SubCell"/>
</dbReference>
<dbReference type="GO" id="GO:0003723">
    <property type="term" value="F:RNA binding"/>
    <property type="evidence" value="ECO:0007669"/>
    <property type="project" value="UniProtKB-KW"/>
</dbReference>
<dbReference type="GO" id="GO:0052170">
    <property type="term" value="P:symbiont-mediated suppression of host innate immune response"/>
    <property type="evidence" value="ECO:0007669"/>
    <property type="project" value="UniProtKB-KW"/>
</dbReference>
<dbReference type="Gene3D" id="1.20.1440.190">
    <property type="entry name" value="Tenuivirus movement protein"/>
    <property type="match status" value="1"/>
</dbReference>
<dbReference type="InterPro" id="IPR007974">
    <property type="entry name" value="Tenui_movmnt_prot"/>
</dbReference>
<dbReference type="InterPro" id="IPR043105">
    <property type="entry name" value="Tenui_NS3"/>
</dbReference>
<dbReference type="Pfam" id="PF05310">
    <property type="entry name" value="Tenui_NS3"/>
    <property type="match status" value="1"/>
</dbReference>
<reference key="1">
    <citation type="journal article" date="1991" name="J. Gen. Virol.">
        <title>Ambisense segment 3 of rice stripe virus: the first instance of a virus containing two ambisense segments.</title>
        <authorList>
            <person name="Kakutani T."/>
            <person name="Hayano Y."/>
            <person name="Hayashi T."/>
            <person name="Minobe Y."/>
        </authorList>
    </citation>
    <scope>NUCLEOTIDE SEQUENCE [GENOMIC RNA]</scope>
</reference>
<name>VSR_RSVM</name>